<evidence type="ECO:0000255" key="1">
    <source>
        <dbReference type="HAMAP-Rule" id="MF_00188"/>
    </source>
</evidence>
<organism>
    <name type="scientific">Ralstonia nicotianae (strain ATCC BAA-1114 / GMI1000)</name>
    <name type="common">Ralstonia solanacearum</name>
    <dbReference type="NCBI Taxonomy" id="267608"/>
    <lineage>
        <taxon>Bacteria</taxon>
        <taxon>Pseudomonadati</taxon>
        <taxon>Pseudomonadota</taxon>
        <taxon>Betaproteobacteria</taxon>
        <taxon>Burkholderiales</taxon>
        <taxon>Burkholderiaceae</taxon>
        <taxon>Ralstonia</taxon>
        <taxon>Ralstonia solanacearum species complex</taxon>
    </lineage>
</organism>
<gene>
    <name evidence="1" type="primary">htpX</name>
    <name type="ordered locus">RSc0074</name>
    <name type="ORF">RS02252</name>
</gene>
<proteinExistence type="inferred from homology"/>
<feature type="chain" id="PRO_0000138883" description="Protease HtpX homolog">
    <location>
        <begin position="1"/>
        <end position="286"/>
    </location>
</feature>
<feature type="transmembrane region" description="Helical" evidence="1">
    <location>
        <begin position="7"/>
        <end position="27"/>
    </location>
</feature>
<feature type="transmembrane region" description="Helical" evidence="1">
    <location>
        <begin position="29"/>
        <end position="49"/>
    </location>
</feature>
<feature type="transmembrane region" description="Helical" evidence="1">
    <location>
        <begin position="146"/>
        <end position="166"/>
    </location>
</feature>
<feature type="transmembrane region" description="Helical" evidence="1">
    <location>
        <begin position="177"/>
        <end position="197"/>
    </location>
</feature>
<feature type="active site" evidence="1">
    <location>
        <position position="132"/>
    </location>
</feature>
<feature type="binding site" evidence="1">
    <location>
        <position position="131"/>
    </location>
    <ligand>
        <name>Zn(2+)</name>
        <dbReference type="ChEBI" id="CHEBI:29105"/>
        <note>catalytic</note>
    </ligand>
</feature>
<feature type="binding site" evidence="1">
    <location>
        <position position="135"/>
    </location>
    <ligand>
        <name>Zn(2+)</name>
        <dbReference type="ChEBI" id="CHEBI:29105"/>
        <note>catalytic</note>
    </ligand>
</feature>
<feature type="binding site" evidence="1">
    <location>
        <position position="202"/>
    </location>
    <ligand>
        <name>Zn(2+)</name>
        <dbReference type="ChEBI" id="CHEBI:29105"/>
        <note>catalytic</note>
    </ligand>
</feature>
<sequence length="286" mass="30703">MFNWIKTFMLMAAITALFIVIGGMIGGRSGMMLALLFALGMNFFSYWFSDKMVLRMYNAQEVSETTAPQFYRMVQELAGRAGLPMPRVYLIDEAQPNAFATGRNPEHAAVAATTGILNILSERELRGVMAHELAHVQHRDILISTLSATMAGAISALANFAVFFGGRDEEGRPVNPIAGIAVAILAPLAASLIQMAISRAREFEADRGGAVISGDPQALASALDKIHRFAAGIPFAAAEAHPATAQMMIMNPLHGGGLANLFSTHPATEERIARLMHMAQTGTYPA</sequence>
<reference key="1">
    <citation type="journal article" date="2002" name="Nature">
        <title>Genome sequence of the plant pathogen Ralstonia solanacearum.</title>
        <authorList>
            <person name="Salanoubat M."/>
            <person name="Genin S."/>
            <person name="Artiguenave F."/>
            <person name="Gouzy J."/>
            <person name="Mangenot S."/>
            <person name="Arlat M."/>
            <person name="Billault A."/>
            <person name="Brottier P."/>
            <person name="Camus J.-C."/>
            <person name="Cattolico L."/>
            <person name="Chandler M."/>
            <person name="Choisne N."/>
            <person name="Claudel-Renard C."/>
            <person name="Cunnac S."/>
            <person name="Demange N."/>
            <person name="Gaspin C."/>
            <person name="Lavie M."/>
            <person name="Moisan A."/>
            <person name="Robert C."/>
            <person name="Saurin W."/>
            <person name="Schiex T."/>
            <person name="Siguier P."/>
            <person name="Thebault P."/>
            <person name="Whalen M."/>
            <person name="Wincker P."/>
            <person name="Levy M."/>
            <person name="Weissenbach J."/>
            <person name="Boucher C.A."/>
        </authorList>
    </citation>
    <scope>NUCLEOTIDE SEQUENCE [LARGE SCALE GENOMIC DNA]</scope>
    <source>
        <strain>ATCC BAA-1114 / GMI1000</strain>
    </source>
</reference>
<comment type="cofactor">
    <cofactor evidence="1">
        <name>Zn(2+)</name>
        <dbReference type="ChEBI" id="CHEBI:29105"/>
    </cofactor>
    <text evidence="1">Binds 1 zinc ion per subunit.</text>
</comment>
<comment type="subcellular location">
    <subcellularLocation>
        <location evidence="1">Cell inner membrane</location>
        <topology evidence="1">Multi-pass membrane protein</topology>
    </subcellularLocation>
</comment>
<comment type="similarity">
    <text evidence="1">Belongs to the peptidase M48B family.</text>
</comment>
<protein>
    <recommendedName>
        <fullName evidence="1">Protease HtpX homolog</fullName>
        <ecNumber evidence="1">3.4.24.-</ecNumber>
    </recommendedName>
</protein>
<accession>Q8Y3A6</accession>
<keyword id="KW-0997">Cell inner membrane</keyword>
<keyword id="KW-1003">Cell membrane</keyword>
<keyword id="KW-0378">Hydrolase</keyword>
<keyword id="KW-0472">Membrane</keyword>
<keyword id="KW-0479">Metal-binding</keyword>
<keyword id="KW-0482">Metalloprotease</keyword>
<keyword id="KW-0645">Protease</keyword>
<keyword id="KW-1185">Reference proteome</keyword>
<keyword id="KW-0812">Transmembrane</keyword>
<keyword id="KW-1133">Transmembrane helix</keyword>
<keyword id="KW-0862">Zinc</keyword>
<dbReference type="EC" id="3.4.24.-" evidence="1"/>
<dbReference type="EMBL" id="AL646052">
    <property type="protein sequence ID" value="CAD13602.1"/>
    <property type="molecule type" value="Genomic_DNA"/>
</dbReference>
<dbReference type="RefSeq" id="WP_011000041.1">
    <property type="nucleotide sequence ID" value="NC_003295.1"/>
</dbReference>
<dbReference type="SMR" id="Q8Y3A6"/>
<dbReference type="STRING" id="267608.RSc0074"/>
<dbReference type="EnsemblBacteria" id="CAD13602">
    <property type="protein sequence ID" value="CAD13602"/>
    <property type="gene ID" value="RSc0074"/>
</dbReference>
<dbReference type="KEGG" id="rso:RSc0074"/>
<dbReference type="eggNOG" id="COG0501">
    <property type="taxonomic scope" value="Bacteria"/>
</dbReference>
<dbReference type="HOGENOM" id="CLU_042266_3_0_4"/>
<dbReference type="Proteomes" id="UP000001436">
    <property type="component" value="Chromosome"/>
</dbReference>
<dbReference type="GO" id="GO:0005886">
    <property type="term" value="C:plasma membrane"/>
    <property type="evidence" value="ECO:0007669"/>
    <property type="project" value="UniProtKB-SubCell"/>
</dbReference>
<dbReference type="GO" id="GO:0004222">
    <property type="term" value="F:metalloendopeptidase activity"/>
    <property type="evidence" value="ECO:0007669"/>
    <property type="project" value="UniProtKB-UniRule"/>
</dbReference>
<dbReference type="GO" id="GO:0008270">
    <property type="term" value="F:zinc ion binding"/>
    <property type="evidence" value="ECO:0007669"/>
    <property type="project" value="UniProtKB-UniRule"/>
</dbReference>
<dbReference type="GO" id="GO:0006508">
    <property type="term" value="P:proteolysis"/>
    <property type="evidence" value="ECO:0007669"/>
    <property type="project" value="UniProtKB-KW"/>
</dbReference>
<dbReference type="CDD" id="cd07336">
    <property type="entry name" value="M48B_HtpX_like"/>
    <property type="match status" value="1"/>
</dbReference>
<dbReference type="Gene3D" id="3.30.2010.10">
    <property type="entry name" value="Metalloproteases ('zincins'), catalytic domain"/>
    <property type="match status" value="1"/>
</dbReference>
<dbReference type="HAMAP" id="MF_00188">
    <property type="entry name" value="Pept_M48_protease_HtpX"/>
    <property type="match status" value="1"/>
</dbReference>
<dbReference type="InterPro" id="IPR050083">
    <property type="entry name" value="HtpX_protease"/>
</dbReference>
<dbReference type="InterPro" id="IPR022919">
    <property type="entry name" value="Pept_M48_protease_HtpX"/>
</dbReference>
<dbReference type="InterPro" id="IPR001915">
    <property type="entry name" value="Peptidase_M48"/>
</dbReference>
<dbReference type="NCBIfam" id="NF002363">
    <property type="entry name" value="PRK01345.1"/>
    <property type="match status" value="1"/>
</dbReference>
<dbReference type="NCBIfam" id="NF002826">
    <property type="entry name" value="PRK03001.1"/>
    <property type="match status" value="1"/>
</dbReference>
<dbReference type="PANTHER" id="PTHR43221">
    <property type="entry name" value="PROTEASE HTPX"/>
    <property type="match status" value="1"/>
</dbReference>
<dbReference type="PANTHER" id="PTHR43221:SF1">
    <property type="entry name" value="PROTEASE HTPX"/>
    <property type="match status" value="1"/>
</dbReference>
<dbReference type="Pfam" id="PF01435">
    <property type="entry name" value="Peptidase_M48"/>
    <property type="match status" value="1"/>
</dbReference>
<dbReference type="PROSITE" id="PS00142">
    <property type="entry name" value="ZINC_PROTEASE"/>
    <property type="match status" value="1"/>
</dbReference>
<name>HTPX_RALN1</name>